<reference key="1">
    <citation type="journal article" date="2006" name="Proc. Natl. Acad. Sci. U.S.A.">
        <title>Molecular genetic anatomy of inter- and intraserotype variation in the human bacterial pathogen group A Streptococcus.</title>
        <authorList>
            <person name="Beres S.B."/>
            <person name="Richter E.W."/>
            <person name="Nagiec M.J."/>
            <person name="Sumby P."/>
            <person name="Porcella S.F."/>
            <person name="DeLeo F.R."/>
            <person name="Musser J.M."/>
        </authorList>
    </citation>
    <scope>NUCLEOTIDE SEQUENCE [LARGE SCALE GENOMIC DNA]</scope>
    <source>
        <strain>MGAS9429</strain>
    </source>
</reference>
<keyword id="KW-0240">DNA-directed RNA polymerase</keyword>
<keyword id="KW-0548">Nucleotidyltransferase</keyword>
<keyword id="KW-0804">Transcription</keyword>
<keyword id="KW-0808">Transferase</keyword>
<sequence length="76" mass="9146">MIYKVFYQETKDQSPRRESTKALYLNIDATDELDGRIKARRLVEDNTYYNVEFIELLSDKHLDYEKETGVFELTEF</sequence>
<name>RPOY_STRPC</name>
<accession>Q1JK37</accession>
<protein>
    <recommendedName>
        <fullName evidence="1">DNA-directed RNA polymerase subunit epsilon</fullName>
        <shortName evidence="1">RNAP epsilon subunit</shortName>
        <ecNumber evidence="1">2.7.7.6</ecNumber>
    </recommendedName>
    <alternativeName>
        <fullName evidence="1">RNA polymerase epsilon subunit</fullName>
    </alternativeName>
    <alternativeName>
        <fullName evidence="1">Transcriptase subunit epsilon</fullName>
    </alternativeName>
</protein>
<organism>
    <name type="scientific">Streptococcus pyogenes serotype M12 (strain MGAS9429)</name>
    <dbReference type="NCBI Taxonomy" id="370551"/>
    <lineage>
        <taxon>Bacteria</taxon>
        <taxon>Bacillati</taxon>
        <taxon>Bacillota</taxon>
        <taxon>Bacilli</taxon>
        <taxon>Lactobacillales</taxon>
        <taxon>Streptococcaceae</taxon>
        <taxon>Streptococcus</taxon>
    </lineage>
</organism>
<comment type="function">
    <text evidence="1">A non-essential component of RNA polymerase (RNAP).</text>
</comment>
<comment type="catalytic activity">
    <reaction evidence="1">
        <text>RNA(n) + a ribonucleoside 5'-triphosphate = RNA(n+1) + diphosphate</text>
        <dbReference type="Rhea" id="RHEA:21248"/>
        <dbReference type="Rhea" id="RHEA-COMP:14527"/>
        <dbReference type="Rhea" id="RHEA-COMP:17342"/>
        <dbReference type="ChEBI" id="CHEBI:33019"/>
        <dbReference type="ChEBI" id="CHEBI:61557"/>
        <dbReference type="ChEBI" id="CHEBI:140395"/>
        <dbReference type="EC" id="2.7.7.6"/>
    </reaction>
</comment>
<comment type="subunit">
    <text evidence="1">RNAP is composed of a core of 2 alpha, a beta and a beta' subunit. The core is associated with a delta subunit, and at least one of epsilon or omega. When a sigma factor is associated with the core the holoenzyme is formed, which can initiate transcription.</text>
</comment>
<comment type="similarity">
    <text evidence="1">Belongs to the RNA polymerase subunit epsilon family.</text>
</comment>
<dbReference type="EC" id="2.7.7.6" evidence="1"/>
<dbReference type="EMBL" id="CP000259">
    <property type="protein sequence ID" value="ABF32786.1"/>
    <property type="molecule type" value="Genomic_DNA"/>
</dbReference>
<dbReference type="RefSeq" id="WP_002982907.1">
    <property type="nucleotide sequence ID" value="NC_008021.1"/>
</dbReference>
<dbReference type="SMR" id="Q1JK37"/>
<dbReference type="KEGG" id="spk:MGAS9429_Spy1599"/>
<dbReference type="HOGENOM" id="CLU_187518_0_0_9"/>
<dbReference type="BRENDA" id="3.2.1.86">
    <property type="organism ID" value="5935"/>
</dbReference>
<dbReference type="Proteomes" id="UP000002433">
    <property type="component" value="Chromosome"/>
</dbReference>
<dbReference type="GO" id="GO:0000428">
    <property type="term" value="C:DNA-directed RNA polymerase complex"/>
    <property type="evidence" value="ECO:0007669"/>
    <property type="project" value="UniProtKB-KW"/>
</dbReference>
<dbReference type="GO" id="GO:0003677">
    <property type="term" value="F:DNA binding"/>
    <property type="evidence" value="ECO:0007669"/>
    <property type="project" value="UniProtKB-UniRule"/>
</dbReference>
<dbReference type="GO" id="GO:0003899">
    <property type="term" value="F:DNA-directed RNA polymerase activity"/>
    <property type="evidence" value="ECO:0007669"/>
    <property type="project" value="UniProtKB-UniRule"/>
</dbReference>
<dbReference type="GO" id="GO:0006351">
    <property type="term" value="P:DNA-templated transcription"/>
    <property type="evidence" value="ECO:0007669"/>
    <property type="project" value="UniProtKB-UniRule"/>
</dbReference>
<dbReference type="Gene3D" id="3.10.20.730">
    <property type="entry name" value="RNAP, epsilon subunit-like"/>
    <property type="match status" value="1"/>
</dbReference>
<dbReference type="HAMAP" id="MF_01553">
    <property type="entry name" value="RNApol_bact_RpoY"/>
    <property type="match status" value="1"/>
</dbReference>
<dbReference type="InterPro" id="IPR009907">
    <property type="entry name" value="RpoY"/>
</dbReference>
<dbReference type="NCBIfam" id="NF010188">
    <property type="entry name" value="PRK13667.1"/>
    <property type="match status" value="1"/>
</dbReference>
<dbReference type="Pfam" id="PF07288">
    <property type="entry name" value="RpoY"/>
    <property type="match status" value="1"/>
</dbReference>
<proteinExistence type="inferred from homology"/>
<feature type="chain" id="PRO_1000068881" description="DNA-directed RNA polymerase subunit epsilon">
    <location>
        <begin position="1"/>
        <end position="76"/>
    </location>
</feature>
<gene>
    <name evidence="1" type="primary">rpoY</name>
    <name type="ordered locus">MGAS9429_Spy1599</name>
</gene>
<evidence type="ECO:0000255" key="1">
    <source>
        <dbReference type="HAMAP-Rule" id="MF_01553"/>
    </source>
</evidence>